<gene>
    <name evidence="1" type="primary">dapD</name>
    <name type="ordered locus">CBU_0667</name>
</gene>
<comment type="catalytic activity">
    <reaction evidence="1">
        <text>(S)-2,3,4,5-tetrahydrodipicolinate + succinyl-CoA + H2O = (S)-2-succinylamino-6-oxoheptanedioate + CoA</text>
        <dbReference type="Rhea" id="RHEA:17325"/>
        <dbReference type="ChEBI" id="CHEBI:15377"/>
        <dbReference type="ChEBI" id="CHEBI:15685"/>
        <dbReference type="ChEBI" id="CHEBI:16845"/>
        <dbReference type="ChEBI" id="CHEBI:57287"/>
        <dbReference type="ChEBI" id="CHEBI:57292"/>
        <dbReference type="EC" id="2.3.1.117"/>
    </reaction>
</comment>
<comment type="pathway">
    <text evidence="1">Amino-acid biosynthesis; L-lysine biosynthesis via DAP pathway; LL-2,6-diaminopimelate from (S)-tetrahydrodipicolinate (succinylase route): step 1/3.</text>
</comment>
<comment type="subunit">
    <text evidence="1">Homotrimer.</text>
</comment>
<comment type="subcellular location">
    <subcellularLocation>
        <location evidence="1">Cytoplasm</location>
    </subcellularLocation>
</comment>
<comment type="similarity">
    <text evidence="1">Belongs to the transferase hexapeptide repeat family.</text>
</comment>
<evidence type="ECO:0000255" key="1">
    <source>
        <dbReference type="HAMAP-Rule" id="MF_00811"/>
    </source>
</evidence>
<protein>
    <recommendedName>
        <fullName evidence="1">2,3,4,5-tetrahydropyridine-2,6-dicarboxylate N-succinyltransferase</fullName>
        <ecNumber evidence="1">2.3.1.117</ecNumber>
    </recommendedName>
    <alternativeName>
        <fullName evidence="1">Tetrahydrodipicolinate N-succinyltransferase</fullName>
        <shortName evidence="1">THDP succinyltransferase</shortName>
        <shortName evidence="1">THP succinyltransferase</shortName>
        <shortName evidence="1">Tetrahydropicolinate succinylase</shortName>
    </alternativeName>
</protein>
<organism>
    <name type="scientific">Coxiella burnetii (strain RSA 493 / Nine Mile phase I)</name>
    <dbReference type="NCBI Taxonomy" id="227377"/>
    <lineage>
        <taxon>Bacteria</taxon>
        <taxon>Pseudomonadati</taxon>
        <taxon>Pseudomonadota</taxon>
        <taxon>Gammaproteobacteria</taxon>
        <taxon>Legionellales</taxon>
        <taxon>Coxiellaceae</taxon>
        <taxon>Coxiella</taxon>
    </lineage>
</organism>
<sequence>MTDLKTIIEEAYQNKDNFTTDTVPKKIHQAIHQTIELLDNGELRIAEKQNGQWNTNEWAKMAILLYFKTEPLKTFDAGYTFFYDKIPLKYTNNTSQPQSGVRVVPHAIVRKGAYLAPNTVLMPSYINIGAYVDSGTLIDTWATVGSCAQIGKNVHLSGGAGIGGVLEPLQAHPTIIEDDCFIGARSEIVEGVMVEKGSVISMGVFVGQSTPIYNRQTQEITYGRIPAGSVVIPGSLPSKDGHYNRYSAIIVKQVDKKTRSKVSLNELLREG</sequence>
<feature type="chain" id="PRO_0000196932" description="2,3,4,5-tetrahydropyridine-2,6-dicarboxylate N-succinyltransferase">
    <location>
        <begin position="1"/>
        <end position="271"/>
    </location>
</feature>
<feature type="binding site" evidence="1">
    <location>
        <position position="102"/>
    </location>
    <ligand>
        <name>substrate</name>
    </ligand>
</feature>
<feature type="binding site" evidence="1">
    <location>
        <position position="139"/>
    </location>
    <ligand>
        <name>substrate</name>
    </ligand>
</feature>
<dbReference type="EC" id="2.3.1.117" evidence="1"/>
<dbReference type="EMBL" id="AE016828">
    <property type="protein sequence ID" value="AAO90211.1"/>
    <property type="molecule type" value="Genomic_DNA"/>
</dbReference>
<dbReference type="RefSeq" id="NP_819697.1">
    <property type="nucleotide sequence ID" value="NC_002971.4"/>
</dbReference>
<dbReference type="RefSeq" id="WP_010957724.1">
    <property type="nucleotide sequence ID" value="NC_002971.4"/>
</dbReference>
<dbReference type="SMR" id="Q83DN1"/>
<dbReference type="STRING" id="227377.CBU_0667"/>
<dbReference type="EnsemblBacteria" id="AAO90211">
    <property type="protein sequence ID" value="AAO90211"/>
    <property type="gene ID" value="CBU_0667"/>
</dbReference>
<dbReference type="GeneID" id="1208553"/>
<dbReference type="KEGG" id="cbu:CBU_0667"/>
<dbReference type="PATRIC" id="fig|227377.7.peg.650"/>
<dbReference type="eggNOG" id="COG2171">
    <property type="taxonomic scope" value="Bacteria"/>
</dbReference>
<dbReference type="HOGENOM" id="CLU_050859_0_1_6"/>
<dbReference type="OrthoDB" id="9775362at2"/>
<dbReference type="UniPathway" id="UPA00034">
    <property type="reaction ID" value="UER00019"/>
</dbReference>
<dbReference type="Proteomes" id="UP000002671">
    <property type="component" value="Chromosome"/>
</dbReference>
<dbReference type="GO" id="GO:0005737">
    <property type="term" value="C:cytoplasm"/>
    <property type="evidence" value="ECO:0007669"/>
    <property type="project" value="UniProtKB-SubCell"/>
</dbReference>
<dbReference type="GO" id="GO:0008666">
    <property type="term" value="F:2,3,4,5-tetrahydropyridine-2,6-dicarboxylate N-succinyltransferase activity"/>
    <property type="evidence" value="ECO:0007669"/>
    <property type="project" value="UniProtKB-UniRule"/>
</dbReference>
<dbReference type="GO" id="GO:0016779">
    <property type="term" value="F:nucleotidyltransferase activity"/>
    <property type="evidence" value="ECO:0000318"/>
    <property type="project" value="GO_Central"/>
</dbReference>
<dbReference type="GO" id="GO:0019877">
    <property type="term" value="P:diaminopimelate biosynthetic process"/>
    <property type="evidence" value="ECO:0000318"/>
    <property type="project" value="GO_Central"/>
</dbReference>
<dbReference type="GO" id="GO:0009085">
    <property type="term" value="P:lysine biosynthetic process"/>
    <property type="evidence" value="ECO:0000318"/>
    <property type="project" value="GO_Central"/>
</dbReference>
<dbReference type="GO" id="GO:0009089">
    <property type="term" value="P:lysine biosynthetic process via diaminopimelate"/>
    <property type="evidence" value="ECO:0007669"/>
    <property type="project" value="UniProtKB-UniRule"/>
</dbReference>
<dbReference type="CDD" id="cd03350">
    <property type="entry name" value="LbH_THP_succinylT"/>
    <property type="match status" value="1"/>
</dbReference>
<dbReference type="Gene3D" id="2.160.10.10">
    <property type="entry name" value="Hexapeptide repeat proteins"/>
    <property type="match status" value="1"/>
</dbReference>
<dbReference type="Gene3D" id="1.10.166.10">
    <property type="entry name" value="Tetrahydrodipicolinate-N-succinyltransferase, N-terminal domain"/>
    <property type="match status" value="1"/>
</dbReference>
<dbReference type="HAMAP" id="MF_00811">
    <property type="entry name" value="DapD"/>
    <property type="match status" value="1"/>
</dbReference>
<dbReference type="InterPro" id="IPR005664">
    <property type="entry name" value="DapD_Trfase_Hexpep_rpt_fam"/>
</dbReference>
<dbReference type="InterPro" id="IPR001451">
    <property type="entry name" value="Hexapep"/>
</dbReference>
<dbReference type="InterPro" id="IPR023180">
    <property type="entry name" value="THP_succinylTrfase_dom1"/>
</dbReference>
<dbReference type="InterPro" id="IPR037133">
    <property type="entry name" value="THP_succinylTrfase_N_sf"/>
</dbReference>
<dbReference type="InterPro" id="IPR050179">
    <property type="entry name" value="Trans_hexapeptide_repeat"/>
</dbReference>
<dbReference type="InterPro" id="IPR011004">
    <property type="entry name" value="Trimer_LpxA-like_sf"/>
</dbReference>
<dbReference type="NCBIfam" id="TIGR00965">
    <property type="entry name" value="dapD"/>
    <property type="match status" value="1"/>
</dbReference>
<dbReference type="NCBIfam" id="NF008808">
    <property type="entry name" value="PRK11830.1"/>
    <property type="match status" value="1"/>
</dbReference>
<dbReference type="PANTHER" id="PTHR43300:SF10">
    <property type="entry name" value="2,3,4,5-TETRAHYDROPYRIDINE-2,6-DICARBOXYLATE N-ACETYLTRANSFERASE"/>
    <property type="match status" value="1"/>
</dbReference>
<dbReference type="PANTHER" id="PTHR43300">
    <property type="entry name" value="ACETYLTRANSFERASE"/>
    <property type="match status" value="1"/>
</dbReference>
<dbReference type="Pfam" id="PF14602">
    <property type="entry name" value="Hexapep_2"/>
    <property type="match status" value="1"/>
</dbReference>
<dbReference type="Pfam" id="PF14805">
    <property type="entry name" value="THDPS_N_2"/>
    <property type="match status" value="1"/>
</dbReference>
<dbReference type="SUPFAM" id="SSF51161">
    <property type="entry name" value="Trimeric LpxA-like enzymes"/>
    <property type="match status" value="1"/>
</dbReference>
<name>DAPD_COXBU</name>
<keyword id="KW-0012">Acyltransferase</keyword>
<keyword id="KW-0028">Amino-acid biosynthesis</keyword>
<keyword id="KW-0963">Cytoplasm</keyword>
<keyword id="KW-0220">Diaminopimelate biosynthesis</keyword>
<keyword id="KW-0457">Lysine biosynthesis</keyword>
<keyword id="KW-1185">Reference proteome</keyword>
<keyword id="KW-0677">Repeat</keyword>
<keyword id="KW-0808">Transferase</keyword>
<reference key="1">
    <citation type="journal article" date="2003" name="Proc. Natl. Acad. Sci. U.S.A.">
        <title>Complete genome sequence of the Q-fever pathogen, Coxiella burnetii.</title>
        <authorList>
            <person name="Seshadri R."/>
            <person name="Paulsen I.T."/>
            <person name="Eisen J.A."/>
            <person name="Read T.D."/>
            <person name="Nelson K.E."/>
            <person name="Nelson W.C."/>
            <person name="Ward N.L."/>
            <person name="Tettelin H."/>
            <person name="Davidsen T.M."/>
            <person name="Beanan M.J."/>
            <person name="DeBoy R.T."/>
            <person name="Daugherty S.C."/>
            <person name="Brinkac L.M."/>
            <person name="Madupu R."/>
            <person name="Dodson R.J."/>
            <person name="Khouri H.M."/>
            <person name="Lee K.H."/>
            <person name="Carty H.A."/>
            <person name="Scanlan D."/>
            <person name="Heinzen R.A."/>
            <person name="Thompson H.A."/>
            <person name="Samuel J.E."/>
            <person name="Fraser C.M."/>
            <person name="Heidelberg J.F."/>
        </authorList>
    </citation>
    <scope>NUCLEOTIDE SEQUENCE [LARGE SCALE GENOMIC DNA]</scope>
    <source>
        <strain>RSA 493 / Nine Mile phase I</strain>
    </source>
</reference>
<accession>Q83DN1</accession>
<proteinExistence type="inferred from homology"/>